<keyword id="KW-0274">FAD</keyword>
<keyword id="KW-0285">Flavoprotein</keyword>
<keyword id="KW-0560">Oxidoreductase</keyword>
<gene>
    <name evidence="1" type="primary">dadA</name>
    <name type="ordered locus">BAbS19_II02950</name>
</gene>
<reference key="1">
    <citation type="journal article" date="2008" name="PLoS ONE">
        <title>Genome sequence of Brucella abortus vaccine strain S19 compared to virulent strains yields candidate virulence genes.</title>
        <authorList>
            <person name="Crasta O.R."/>
            <person name="Folkerts O."/>
            <person name="Fei Z."/>
            <person name="Mane S.P."/>
            <person name="Evans C."/>
            <person name="Martino-Catt S."/>
            <person name="Bricker B."/>
            <person name="Yu G."/>
            <person name="Du L."/>
            <person name="Sobral B.W."/>
        </authorList>
    </citation>
    <scope>NUCLEOTIDE SEQUENCE [LARGE SCALE GENOMIC DNA]</scope>
    <source>
        <strain>S19</strain>
    </source>
</reference>
<proteinExistence type="inferred from homology"/>
<evidence type="ECO:0000255" key="1">
    <source>
        <dbReference type="HAMAP-Rule" id="MF_01202"/>
    </source>
</evidence>
<name>DADA_BRUA1</name>
<sequence length="416" mass="45110">MQITILGSGVIGVTTAYYLAKLGHEVTVIDREEGPALETSFANAGQVSPGYASPWAAPGIPLKAAKWLFQKHAPLILRLTTDPVQYRWLLQMLANCTDSRYKINKTRMVRVAEYSRDCLIELRKDTGIEYDQRSQGTLQLFREQYQLDGIGKDIEVLRQDGVPFEVLDRDGCVNVEPALAHAKDKFVGGLRLPNDETGDCFKFTNALAKIAEGLGVKFRFGVNIKSLLMSGGKISGVETSEGIVTAERYVVALGSYTPALIKALGLNAPIYPVKGYSITAPIVDESRAPVSTVLDESYKIAITRLGDRIRVGGMAEVSGFTDDLPAARRATLDLSVTDLFPGGDLKAATFWSGLRPMTPDSTPIIGGTRYDNLFINAGHGTLGWTMACGSGRLLADLISGNKADIRADDLGIARYN</sequence>
<accession>B2SDA2</accession>
<dbReference type="EC" id="1.4.99.-" evidence="1"/>
<dbReference type="EMBL" id="CP000888">
    <property type="protein sequence ID" value="ACD73806.1"/>
    <property type="molecule type" value="Genomic_DNA"/>
</dbReference>
<dbReference type="RefSeq" id="WP_002965723.1">
    <property type="nucleotide sequence ID" value="NC_010740.1"/>
</dbReference>
<dbReference type="SMR" id="B2SDA2"/>
<dbReference type="KEGG" id="bmc:BAbS19_II02950"/>
<dbReference type="HOGENOM" id="CLU_007884_9_2_5"/>
<dbReference type="UniPathway" id="UPA00043">
    <property type="reaction ID" value="UER00498"/>
</dbReference>
<dbReference type="Proteomes" id="UP000002565">
    <property type="component" value="Chromosome 2"/>
</dbReference>
<dbReference type="GO" id="GO:0005737">
    <property type="term" value="C:cytoplasm"/>
    <property type="evidence" value="ECO:0007669"/>
    <property type="project" value="TreeGrafter"/>
</dbReference>
<dbReference type="GO" id="GO:0005886">
    <property type="term" value="C:plasma membrane"/>
    <property type="evidence" value="ECO:0007669"/>
    <property type="project" value="TreeGrafter"/>
</dbReference>
<dbReference type="GO" id="GO:0008718">
    <property type="term" value="F:D-amino-acid dehydrogenase activity"/>
    <property type="evidence" value="ECO:0007669"/>
    <property type="project" value="UniProtKB-UniRule"/>
</dbReference>
<dbReference type="GO" id="GO:0055130">
    <property type="term" value="P:D-alanine catabolic process"/>
    <property type="evidence" value="ECO:0007669"/>
    <property type="project" value="UniProtKB-UniPathway"/>
</dbReference>
<dbReference type="FunFam" id="3.50.50.60:FF:000020">
    <property type="entry name" value="D-amino acid dehydrogenase"/>
    <property type="match status" value="1"/>
</dbReference>
<dbReference type="Gene3D" id="3.30.9.10">
    <property type="entry name" value="D-Amino Acid Oxidase, subunit A, domain 2"/>
    <property type="match status" value="1"/>
</dbReference>
<dbReference type="Gene3D" id="3.50.50.60">
    <property type="entry name" value="FAD/NAD(P)-binding domain"/>
    <property type="match status" value="2"/>
</dbReference>
<dbReference type="HAMAP" id="MF_01202">
    <property type="entry name" value="DadA"/>
    <property type="match status" value="1"/>
</dbReference>
<dbReference type="InterPro" id="IPR023080">
    <property type="entry name" value="DadA"/>
</dbReference>
<dbReference type="InterPro" id="IPR006076">
    <property type="entry name" value="FAD-dep_OxRdtase"/>
</dbReference>
<dbReference type="InterPro" id="IPR036188">
    <property type="entry name" value="FAD/NAD-bd_sf"/>
</dbReference>
<dbReference type="NCBIfam" id="NF001933">
    <property type="entry name" value="PRK00711.1"/>
    <property type="match status" value="1"/>
</dbReference>
<dbReference type="PANTHER" id="PTHR13847:SF280">
    <property type="entry name" value="D-AMINO ACID DEHYDROGENASE"/>
    <property type="match status" value="1"/>
</dbReference>
<dbReference type="PANTHER" id="PTHR13847">
    <property type="entry name" value="SARCOSINE DEHYDROGENASE-RELATED"/>
    <property type="match status" value="1"/>
</dbReference>
<dbReference type="Pfam" id="PF01266">
    <property type="entry name" value="DAO"/>
    <property type="match status" value="1"/>
</dbReference>
<dbReference type="SUPFAM" id="SSF54373">
    <property type="entry name" value="FAD-linked reductases, C-terminal domain"/>
    <property type="match status" value="1"/>
</dbReference>
<dbReference type="SUPFAM" id="SSF51905">
    <property type="entry name" value="FAD/NAD(P)-binding domain"/>
    <property type="match status" value="1"/>
</dbReference>
<feature type="chain" id="PRO_1000138640" description="D-amino acid dehydrogenase">
    <location>
        <begin position="1"/>
        <end position="416"/>
    </location>
</feature>
<feature type="binding site" evidence="1">
    <location>
        <begin position="3"/>
        <end position="17"/>
    </location>
    <ligand>
        <name>FAD</name>
        <dbReference type="ChEBI" id="CHEBI:57692"/>
    </ligand>
</feature>
<organism>
    <name type="scientific">Brucella abortus (strain S19)</name>
    <dbReference type="NCBI Taxonomy" id="430066"/>
    <lineage>
        <taxon>Bacteria</taxon>
        <taxon>Pseudomonadati</taxon>
        <taxon>Pseudomonadota</taxon>
        <taxon>Alphaproteobacteria</taxon>
        <taxon>Hyphomicrobiales</taxon>
        <taxon>Brucellaceae</taxon>
        <taxon>Brucella/Ochrobactrum group</taxon>
        <taxon>Brucella</taxon>
    </lineage>
</organism>
<comment type="function">
    <text evidence="1">Oxidative deamination of D-amino acids.</text>
</comment>
<comment type="catalytic activity">
    <reaction evidence="1">
        <text>a D-alpha-amino acid + A + H2O = a 2-oxocarboxylate + AH2 + NH4(+)</text>
        <dbReference type="Rhea" id="RHEA:18125"/>
        <dbReference type="ChEBI" id="CHEBI:13193"/>
        <dbReference type="ChEBI" id="CHEBI:15377"/>
        <dbReference type="ChEBI" id="CHEBI:17499"/>
        <dbReference type="ChEBI" id="CHEBI:28938"/>
        <dbReference type="ChEBI" id="CHEBI:35179"/>
        <dbReference type="ChEBI" id="CHEBI:59871"/>
    </reaction>
</comment>
<comment type="cofactor">
    <cofactor evidence="1">
        <name>FAD</name>
        <dbReference type="ChEBI" id="CHEBI:57692"/>
    </cofactor>
</comment>
<comment type="pathway">
    <text>Amino-acid degradation; D-alanine degradation; NH(3) and pyruvate from D-alanine: step 1/1.</text>
</comment>
<comment type="similarity">
    <text evidence="1">Belongs to the DadA oxidoreductase family.</text>
</comment>
<protein>
    <recommendedName>
        <fullName evidence="1">D-amino acid dehydrogenase</fullName>
        <ecNumber evidence="1">1.4.99.-</ecNumber>
    </recommendedName>
</protein>